<dbReference type="EC" id="1.1.1.103" evidence="1"/>
<dbReference type="EMBL" id="AM743169">
    <property type="protein sequence ID" value="CAQ44525.1"/>
    <property type="molecule type" value="Genomic_DNA"/>
</dbReference>
<dbReference type="RefSeq" id="WP_010483949.1">
    <property type="nucleotide sequence ID" value="NC_010943.1"/>
</dbReference>
<dbReference type="SMR" id="B2FQN4"/>
<dbReference type="EnsemblBacteria" id="CAQ44525">
    <property type="protein sequence ID" value="CAQ44525"/>
    <property type="gene ID" value="Smlt0961"/>
</dbReference>
<dbReference type="GeneID" id="86936636"/>
<dbReference type="KEGG" id="sml:Smlt0961"/>
<dbReference type="eggNOG" id="COG1063">
    <property type="taxonomic scope" value="Bacteria"/>
</dbReference>
<dbReference type="HOGENOM" id="CLU_026673_11_0_6"/>
<dbReference type="UniPathway" id="UPA00046">
    <property type="reaction ID" value="UER00505"/>
</dbReference>
<dbReference type="Proteomes" id="UP000008840">
    <property type="component" value="Chromosome"/>
</dbReference>
<dbReference type="GO" id="GO:0005737">
    <property type="term" value="C:cytoplasm"/>
    <property type="evidence" value="ECO:0007669"/>
    <property type="project" value="UniProtKB-SubCell"/>
</dbReference>
<dbReference type="GO" id="GO:0008743">
    <property type="term" value="F:L-threonine 3-dehydrogenase activity"/>
    <property type="evidence" value="ECO:0007669"/>
    <property type="project" value="UniProtKB-UniRule"/>
</dbReference>
<dbReference type="GO" id="GO:0008270">
    <property type="term" value="F:zinc ion binding"/>
    <property type="evidence" value="ECO:0007669"/>
    <property type="project" value="UniProtKB-UniRule"/>
</dbReference>
<dbReference type="GO" id="GO:0019518">
    <property type="term" value="P:L-threonine catabolic process to glycine"/>
    <property type="evidence" value="ECO:0007669"/>
    <property type="project" value="UniProtKB-UniPathway"/>
</dbReference>
<dbReference type="Gene3D" id="3.90.180.10">
    <property type="entry name" value="Medium-chain alcohol dehydrogenases, catalytic domain"/>
    <property type="match status" value="1"/>
</dbReference>
<dbReference type="Gene3D" id="3.40.50.720">
    <property type="entry name" value="NAD(P)-binding Rossmann-like Domain"/>
    <property type="match status" value="1"/>
</dbReference>
<dbReference type="HAMAP" id="MF_00627">
    <property type="entry name" value="Thr_dehydrog"/>
    <property type="match status" value="1"/>
</dbReference>
<dbReference type="InterPro" id="IPR013149">
    <property type="entry name" value="ADH-like_C"/>
</dbReference>
<dbReference type="InterPro" id="IPR013154">
    <property type="entry name" value="ADH-like_N"/>
</dbReference>
<dbReference type="InterPro" id="IPR002328">
    <property type="entry name" value="ADH_Zn_CS"/>
</dbReference>
<dbReference type="InterPro" id="IPR011032">
    <property type="entry name" value="GroES-like_sf"/>
</dbReference>
<dbReference type="InterPro" id="IPR004627">
    <property type="entry name" value="L-Threonine_3-DHase"/>
</dbReference>
<dbReference type="InterPro" id="IPR036291">
    <property type="entry name" value="NAD(P)-bd_dom_sf"/>
</dbReference>
<dbReference type="InterPro" id="IPR020843">
    <property type="entry name" value="PKS_ER"/>
</dbReference>
<dbReference type="InterPro" id="IPR050129">
    <property type="entry name" value="Zn_alcohol_dh"/>
</dbReference>
<dbReference type="NCBIfam" id="NF003808">
    <property type="entry name" value="PRK05396.1"/>
    <property type="match status" value="1"/>
</dbReference>
<dbReference type="NCBIfam" id="TIGR00692">
    <property type="entry name" value="tdh"/>
    <property type="match status" value="1"/>
</dbReference>
<dbReference type="PANTHER" id="PTHR43401">
    <property type="entry name" value="L-THREONINE 3-DEHYDROGENASE"/>
    <property type="match status" value="1"/>
</dbReference>
<dbReference type="PANTHER" id="PTHR43401:SF2">
    <property type="entry name" value="L-THREONINE 3-DEHYDROGENASE"/>
    <property type="match status" value="1"/>
</dbReference>
<dbReference type="Pfam" id="PF08240">
    <property type="entry name" value="ADH_N"/>
    <property type="match status" value="1"/>
</dbReference>
<dbReference type="Pfam" id="PF00107">
    <property type="entry name" value="ADH_zinc_N"/>
    <property type="match status" value="1"/>
</dbReference>
<dbReference type="SMART" id="SM00829">
    <property type="entry name" value="PKS_ER"/>
    <property type="match status" value="1"/>
</dbReference>
<dbReference type="SUPFAM" id="SSF50129">
    <property type="entry name" value="GroES-like"/>
    <property type="match status" value="1"/>
</dbReference>
<dbReference type="SUPFAM" id="SSF51735">
    <property type="entry name" value="NAD(P)-binding Rossmann-fold domains"/>
    <property type="match status" value="1"/>
</dbReference>
<dbReference type="PROSITE" id="PS00059">
    <property type="entry name" value="ADH_ZINC"/>
    <property type="match status" value="1"/>
</dbReference>
<gene>
    <name evidence="1" type="primary">tdh</name>
    <name type="ordered locus">Smlt0961</name>
</gene>
<keyword id="KW-0963">Cytoplasm</keyword>
<keyword id="KW-0479">Metal-binding</keyword>
<keyword id="KW-0520">NAD</keyword>
<keyword id="KW-0560">Oxidoreductase</keyword>
<keyword id="KW-1185">Reference proteome</keyword>
<keyword id="KW-0862">Zinc</keyword>
<name>TDH_STRMK</name>
<comment type="function">
    <text evidence="1">Catalyzes the NAD(+)-dependent oxidation of L-threonine to 2-amino-3-ketobutyrate.</text>
</comment>
<comment type="catalytic activity">
    <reaction evidence="1">
        <text>L-threonine + NAD(+) = (2S)-2-amino-3-oxobutanoate + NADH + H(+)</text>
        <dbReference type="Rhea" id="RHEA:13161"/>
        <dbReference type="ChEBI" id="CHEBI:15378"/>
        <dbReference type="ChEBI" id="CHEBI:57540"/>
        <dbReference type="ChEBI" id="CHEBI:57926"/>
        <dbReference type="ChEBI" id="CHEBI:57945"/>
        <dbReference type="ChEBI" id="CHEBI:78948"/>
        <dbReference type="EC" id="1.1.1.103"/>
    </reaction>
</comment>
<comment type="cofactor">
    <cofactor evidence="1">
        <name>Zn(2+)</name>
        <dbReference type="ChEBI" id="CHEBI:29105"/>
    </cofactor>
    <text evidence="1">Binds 2 Zn(2+) ions per subunit.</text>
</comment>
<comment type="pathway">
    <text evidence="1">Amino-acid degradation; L-threonine degradation via oxydo-reductase pathway; glycine from L-threonine: step 1/2.</text>
</comment>
<comment type="subunit">
    <text evidence="1">Homotetramer.</text>
</comment>
<comment type="subcellular location">
    <subcellularLocation>
        <location evidence="1">Cytoplasm</location>
    </subcellularLocation>
</comment>
<comment type="similarity">
    <text evidence="1">Belongs to the zinc-containing alcohol dehydrogenase family.</text>
</comment>
<proteinExistence type="inferred from homology"/>
<evidence type="ECO:0000255" key="1">
    <source>
        <dbReference type="HAMAP-Rule" id="MF_00627"/>
    </source>
</evidence>
<feature type="chain" id="PRO_1000130569" description="L-threonine 3-dehydrogenase">
    <location>
        <begin position="1"/>
        <end position="340"/>
    </location>
</feature>
<feature type="active site" description="Charge relay system" evidence="1">
    <location>
        <position position="40"/>
    </location>
</feature>
<feature type="active site" description="Charge relay system" evidence="1">
    <location>
        <position position="43"/>
    </location>
</feature>
<feature type="binding site" evidence="1">
    <location>
        <position position="38"/>
    </location>
    <ligand>
        <name>Zn(2+)</name>
        <dbReference type="ChEBI" id="CHEBI:29105"/>
        <label>1</label>
        <note>catalytic</note>
    </ligand>
</feature>
<feature type="binding site" evidence="1">
    <location>
        <position position="63"/>
    </location>
    <ligand>
        <name>Zn(2+)</name>
        <dbReference type="ChEBI" id="CHEBI:29105"/>
        <label>1</label>
        <note>catalytic</note>
    </ligand>
</feature>
<feature type="binding site" evidence="1">
    <location>
        <position position="64"/>
    </location>
    <ligand>
        <name>Zn(2+)</name>
        <dbReference type="ChEBI" id="CHEBI:29105"/>
        <label>1</label>
        <note>catalytic</note>
    </ligand>
</feature>
<feature type="binding site" evidence="1">
    <location>
        <position position="93"/>
    </location>
    <ligand>
        <name>Zn(2+)</name>
        <dbReference type="ChEBI" id="CHEBI:29105"/>
        <label>2</label>
    </ligand>
</feature>
<feature type="binding site" evidence="1">
    <location>
        <position position="96"/>
    </location>
    <ligand>
        <name>Zn(2+)</name>
        <dbReference type="ChEBI" id="CHEBI:29105"/>
        <label>2</label>
    </ligand>
</feature>
<feature type="binding site" evidence="1">
    <location>
        <position position="99"/>
    </location>
    <ligand>
        <name>Zn(2+)</name>
        <dbReference type="ChEBI" id="CHEBI:29105"/>
        <label>2</label>
    </ligand>
</feature>
<feature type="binding site" evidence="1">
    <location>
        <position position="107"/>
    </location>
    <ligand>
        <name>Zn(2+)</name>
        <dbReference type="ChEBI" id="CHEBI:29105"/>
        <label>2</label>
    </ligand>
</feature>
<feature type="binding site" evidence="1">
    <location>
        <position position="175"/>
    </location>
    <ligand>
        <name>NAD(+)</name>
        <dbReference type="ChEBI" id="CHEBI:57540"/>
    </ligand>
</feature>
<feature type="binding site" evidence="1">
    <location>
        <position position="195"/>
    </location>
    <ligand>
        <name>NAD(+)</name>
        <dbReference type="ChEBI" id="CHEBI:57540"/>
    </ligand>
</feature>
<feature type="binding site" evidence="1">
    <location>
        <position position="200"/>
    </location>
    <ligand>
        <name>NAD(+)</name>
        <dbReference type="ChEBI" id="CHEBI:57540"/>
    </ligand>
</feature>
<feature type="binding site" evidence="1">
    <location>
        <begin position="261"/>
        <end position="263"/>
    </location>
    <ligand>
        <name>NAD(+)</name>
        <dbReference type="ChEBI" id="CHEBI:57540"/>
    </ligand>
</feature>
<feature type="binding site" evidence="1">
    <location>
        <begin position="285"/>
        <end position="286"/>
    </location>
    <ligand>
        <name>NAD(+)</name>
        <dbReference type="ChEBI" id="CHEBI:57540"/>
    </ligand>
</feature>
<feature type="site" description="Important for catalytic activity for the proton relay mechanism but does not participate directly in the coordination of zinc atom" evidence="1">
    <location>
        <position position="148"/>
    </location>
</feature>
<reference key="1">
    <citation type="journal article" date="2008" name="Genome Biol.">
        <title>The complete genome, comparative and functional analysis of Stenotrophomonas maltophilia reveals an organism heavily shielded by drug resistance determinants.</title>
        <authorList>
            <person name="Crossman L.C."/>
            <person name="Gould V.C."/>
            <person name="Dow J.M."/>
            <person name="Vernikos G.S."/>
            <person name="Okazaki A."/>
            <person name="Sebaihia M."/>
            <person name="Saunders D."/>
            <person name="Arrowsmith C."/>
            <person name="Carver T."/>
            <person name="Peters N."/>
            <person name="Adlem E."/>
            <person name="Kerhornou A."/>
            <person name="Lord A."/>
            <person name="Murphy L."/>
            <person name="Seeger K."/>
            <person name="Squares R."/>
            <person name="Rutter S."/>
            <person name="Quail M.A."/>
            <person name="Rajandream M.A."/>
            <person name="Harris D."/>
            <person name="Churcher C."/>
            <person name="Bentley S.D."/>
            <person name="Parkhill J."/>
            <person name="Thomson N.R."/>
            <person name="Avison M.B."/>
        </authorList>
    </citation>
    <scope>NUCLEOTIDE SEQUENCE [LARGE SCALE GENOMIC DNA]</scope>
    <source>
        <strain>K279a</strain>
    </source>
</reference>
<organism>
    <name type="scientific">Stenotrophomonas maltophilia (strain K279a)</name>
    <dbReference type="NCBI Taxonomy" id="522373"/>
    <lineage>
        <taxon>Bacteria</taxon>
        <taxon>Pseudomonadati</taxon>
        <taxon>Pseudomonadota</taxon>
        <taxon>Gammaproteobacteria</taxon>
        <taxon>Lysobacterales</taxon>
        <taxon>Lysobacteraceae</taxon>
        <taxon>Stenotrophomonas</taxon>
        <taxon>Stenotrophomonas maltophilia group</taxon>
    </lineage>
</organism>
<sequence>MKALVKREAAKGIWLEEVPVPTPGPNEVLIKLEKTAICGTDLHIYLWDEWSQRTIKPGLTIGHEFVGRVAALGSAVTGYEIGQRVSAEGHIVCGHCRNCRGGRPHLCPNTVGIGVNVNGAFAEYMVMPASNLWPIPDQIPSELAAFFDPYGNAAHCALEFNVIGEDVLITGAGPIGIIAAGICKHIGARNVVVTDVNDFRLKLAADMGATRVVNVANQSLKDVMKELHMEGFDVGLEMSGNPRAFNDMLDCMYHGGKIAMLGIMPKGAGCDWDKIIFKGLTVQGIYGRKMYETWYKMTQLVLSGFPLGKVMTHQLPIDDFQKGFDLMEEGKAGKVVLSWN</sequence>
<protein>
    <recommendedName>
        <fullName evidence="1">L-threonine 3-dehydrogenase</fullName>
        <shortName evidence="1">TDH</shortName>
        <ecNumber evidence="1">1.1.1.103</ecNumber>
    </recommendedName>
</protein>
<accession>B2FQN4</accession>